<evidence type="ECO:0000250" key="1"/>
<evidence type="ECO:0000250" key="2">
    <source>
        <dbReference type="UniProtKB" id="Q9JLM8"/>
    </source>
</evidence>
<evidence type="ECO:0000255" key="3">
    <source>
        <dbReference type="PROSITE-ProRule" id="PRU00159"/>
    </source>
</evidence>
<evidence type="ECO:0000255" key="4">
    <source>
        <dbReference type="PROSITE-ProRule" id="PRU10027"/>
    </source>
</evidence>
<evidence type="ECO:0000256" key="5">
    <source>
        <dbReference type="SAM" id="MobiDB-lite"/>
    </source>
</evidence>
<evidence type="ECO:0000305" key="6"/>
<evidence type="ECO:0007744" key="7">
    <source>
    </source>
</evidence>
<accession>O08875</accession>
<dbReference type="EC" id="2.7.11.1"/>
<dbReference type="EMBL" id="U78857">
    <property type="protein sequence ID" value="AAC99476.1"/>
    <property type="molecule type" value="mRNA"/>
</dbReference>
<dbReference type="RefSeq" id="NP_445795.1">
    <property type="nucleotide sequence ID" value="NM_053343.3"/>
</dbReference>
<dbReference type="SMR" id="O08875"/>
<dbReference type="BioGRID" id="249852">
    <property type="interactions" value="1"/>
</dbReference>
<dbReference type="FunCoup" id="O08875">
    <property type="interactions" value="1306"/>
</dbReference>
<dbReference type="IntAct" id="O08875">
    <property type="interactions" value="3"/>
</dbReference>
<dbReference type="MINT" id="O08875"/>
<dbReference type="STRING" id="10116.ENSRNOP00000019748"/>
<dbReference type="GlyGen" id="O08875">
    <property type="glycosylation" value="1 site, 1 O-linked glycan (1 site)"/>
</dbReference>
<dbReference type="iPTMnet" id="O08875"/>
<dbReference type="PhosphoSitePlus" id="O08875"/>
<dbReference type="PaxDb" id="10116-ENSRNOP00000019748"/>
<dbReference type="GeneID" id="83825"/>
<dbReference type="KEGG" id="rno:83825"/>
<dbReference type="UCSC" id="RGD:68437">
    <property type="organism name" value="rat"/>
</dbReference>
<dbReference type="AGR" id="RGD:68437"/>
<dbReference type="CTD" id="9201"/>
<dbReference type="RGD" id="68437">
    <property type="gene designation" value="Dclk1"/>
</dbReference>
<dbReference type="VEuPathDB" id="HostDB:ENSRNOG00000032922"/>
<dbReference type="eggNOG" id="KOG0032">
    <property type="taxonomic scope" value="Eukaryota"/>
</dbReference>
<dbReference type="HOGENOM" id="CLU_000288_63_0_1"/>
<dbReference type="InParanoid" id="O08875"/>
<dbReference type="OrthoDB" id="6516135at2759"/>
<dbReference type="PhylomeDB" id="O08875"/>
<dbReference type="BRENDA" id="2.7.11.1">
    <property type="organism ID" value="5301"/>
</dbReference>
<dbReference type="PRO" id="PR:O08875"/>
<dbReference type="Proteomes" id="UP000002494">
    <property type="component" value="Chromosome 2"/>
</dbReference>
<dbReference type="Bgee" id="ENSRNOG00000032922">
    <property type="expression patterns" value="Expressed in frontal cortex and 20 other cell types or tissues"/>
</dbReference>
<dbReference type="ExpressionAtlas" id="O08875">
    <property type="expression patterns" value="baseline and differential"/>
</dbReference>
<dbReference type="GO" id="GO:0030424">
    <property type="term" value="C:axon"/>
    <property type="evidence" value="ECO:0000314"/>
    <property type="project" value="RGD"/>
</dbReference>
<dbReference type="GO" id="GO:0005737">
    <property type="term" value="C:cytoplasm"/>
    <property type="evidence" value="ECO:0000318"/>
    <property type="project" value="GO_Central"/>
</dbReference>
<dbReference type="GO" id="GO:0098978">
    <property type="term" value="C:glutamatergic synapse"/>
    <property type="evidence" value="ECO:0000266"/>
    <property type="project" value="RGD"/>
</dbReference>
<dbReference type="GO" id="GO:0030426">
    <property type="term" value="C:growth cone"/>
    <property type="evidence" value="ECO:0000314"/>
    <property type="project" value="RGD"/>
</dbReference>
<dbReference type="GO" id="GO:0098794">
    <property type="term" value="C:postsynapse"/>
    <property type="evidence" value="ECO:0000266"/>
    <property type="project" value="RGD"/>
</dbReference>
<dbReference type="GO" id="GO:0014069">
    <property type="term" value="C:postsynaptic density"/>
    <property type="evidence" value="ECO:0000266"/>
    <property type="project" value="RGD"/>
</dbReference>
<dbReference type="GO" id="GO:0005524">
    <property type="term" value="F:ATP binding"/>
    <property type="evidence" value="ECO:0007669"/>
    <property type="project" value="UniProtKB-KW"/>
</dbReference>
<dbReference type="GO" id="GO:0004672">
    <property type="term" value="F:protein kinase activity"/>
    <property type="evidence" value="ECO:0000314"/>
    <property type="project" value="RGD"/>
</dbReference>
<dbReference type="GO" id="GO:0106310">
    <property type="term" value="F:protein serine kinase activity"/>
    <property type="evidence" value="ECO:0007669"/>
    <property type="project" value="RHEA"/>
</dbReference>
<dbReference type="GO" id="GO:0004674">
    <property type="term" value="F:protein serine/threonine kinase activity"/>
    <property type="evidence" value="ECO:0000318"/>
    <property type="project" value="GO_Central"/>
</dbReference>
<dbReference type="GO" id="GO:0048675">
    <property type="term" value="P:axon extension"/>
    <property type="evidence" value="ECO:0000266"/>
    <property type="project" value="RGD"/>
</dbReference>
<dbReference type="GO" id="GO:0007409">
    <property type="term" value="P:axonogenesis"/>
    <property type="evidence" value="ECO:0000266"/>
    <property type="project" value="RGD"/>
</dbReference>
<dbReference type="GO" id="GO:0007420">
    <property type="term" value="P:brain development"/>
    <property type="evidence" value="ECO:0000266"/>
    <property type="project" value="RGD"/>
</dbReference>
<dbReference type="GO" id="GO:0021952">
    <property type="term" value="P:central nervous system projection neuron axonogenesis"/>
    <property type="evidence" value="ECO:0000266"/>
    <property type="project" value="RGD"/>
</dbReference>
<dbReference type="GO" id="GO:0048813">
    <property type="term" value="P:dendrite morphogenesis"/>
    <property type="evidence" value="ECO:0000266"/>
    <property type="project" value="RGD"/>
</dbReference>
<dbReference type="GO" id="GO:0030900">
    <property type="term" value="P:forebrain development"/>
    <property type="evidence" value="ECO:0000266"/>
    <property type="project" value="RGD"/>
</dbReference>
<dbReference type="GO" id="GO:1900181">
    <property type="term" value="P:negative regulation of protein localization to nucleus"/>
    <property type="evidence" value="ECO:0000266"/>
    <property type="project" value="RGD"/>
</dbReference>
<dbReference type="GO" id="GO:0001764">
    <property type="term" value="P:neuron migration"/>
    <property type="evidence" value="ECO:0000266"/>
    <property type="project" value="RGD"/>
</dbReference>
<dbReference type="GO" id="GO:0034504">
    <property type="term" value="P:protein localization to nucleus"/>
    <property type="evidence" value="ECO:0000266"/>
    <property type="project" value="RGD"/>
</dbReference>
<dbReference type="GO" id="GO:0150052">
    <property type="term" value="P:regulation of postsynapse assembly"/>
    <property type="evidence" value="ECO:0000266"/>
    <property type="project" value="RGD"/>
</dbReference>
<dbReference type="GO" id="GO:0009615">
    <property type="term" value="P:response to virus"/>
    <property type="evidence" value="ECO:0000266"/>
    <property type="project" value="RGD"/>
</dbReference>
<dbReference type="CDD" id="cd14095">
    <property type="entry name" value="STKc_DCKL"/>
    <property type="match status" value="1"/>
</dbReference>
<dbReference type="FunFam" id="1.10.510.10:FF:000066">
    <property type="entry name" value="Serine/threonine-protein kinase DCLK1 isoform 2"/>
    <property type="match status" value="1"/>
</dbReference>
<dbReference type="FunFam" id="3.30.200.20:FF:000057">
    <property type="entry name" value="Serine/threonine-protein kinase DCLK1 isoform 2"/>
    <property type="match status" value="1"/>
</dbReference>
<dbReference type="Gene3D" id="3.30.200.20">
    <property type="entry name" value="Phosphorylase Kinase, domain 1"/>
    <property type="match status" value="1"/>
</dbReference>
<dbReference type="Gene3D" id="1.10.510.10">
    <property type="entry name" value="Transferase(Phosphotransferase) domain 1"/>
    <property type="match status" value="1"/>
</dbReference>
<dbReference type="InterPro" id="IPR011009">
    <property type="entry name" value="Kinase-like_dom_sf"/>
</dbReference>
<dbReference type="InterPro" id="IPR000719">
    <property type="entry name" value="Prot_kinase_dom"/>
</dbReference>
<dbReference type="InterPro" id="IPR017441">
    <property type="entry name" value="Protein_kinase_ATP_BS"/>
</dbReference>
<dbReference type="InterPro" id="IPR008271">
    <property type="entry name" value="Ser/Thr_kinase_AS"/>
</dbReference>
<dbReference type="PANTHER" id="PTHR24347">
    <property type="entry name" value="SERINE/THREONINE-PROTEIN KINASE"/>
    <property type="match status" value="1"/>
</dbReference>
<dbReference type="Pfam" id="PF00069">
    <property type="entry name" value="Pkinase"/>
    <property type="match status" value="1"/>
</dbReference>
<dbReference type="SMART" id="SM00220">
    <property type="entry name" value="S_TKc"/>
    <property type="match status" value="1"/>
</dbReference>
<dbReference type="SUPFAM" id="SSF56112">
    <property type="entry name" value="Protein kinase-like (PK-like)"/>
    <property type="match status" value="1"/>
</dbReference>
<dbReference type="PROSITE" id="PS00107">
    <property type="entry name" value="PROTEIN_KINASE_ATP"/>
    <property type="match status" value="1"/>
</dbReference>
<dbReference type="PROSITE" id="PS50011">
    <property type="entry name" value="PROTEIN_KINASE_DOM"/>
    <property type="match status" value="1"/>
</dbReference>
<dbReference type="PROSITE" id="PS00108">
    <property type="entry name" value="PROTEIN_KINASE_ST"/>
    <property type="match status" value="1"/>
</dbReference>
<keyword id="KW-0067">ATP-binding</keyword>
<keyword id="KW-0217">Developmental protein</keyword>
<keyword id="KW-0221">Differentiation</keyword>
<keyword id="KW-0418">Kinase</keyword>
<keyword id="KW-0524">Neurogenesis</keyword>
<keyword id="KW-0547">Nucleotide-binding</keyword>
<keyword id="KW-0597">Phosphoprotein</keyword>
<keyword id="KW-1185">Reference proteome</keyword>
<keyword id="KW-0723">Serine/threonine-protein kinase</keyword>
<keyword id="KW-0808">Transferase</keyword>
<protein>
    <recommendedName>
        <fullName>Serine/threonine-protein kinase DCLK1</fullName>
        <ecNumber>2.7.11.1</ecNumber>
    </recommendedName>
    <alternativeName>
        <fullName>Calcium/calmodulin-dependent protein kinase type I-like CPG16</fullName>
    </alternativeName>
    <alternativeName>
        <fullName>Doublecortin-like and CAM kinase-like 1</fullName>
    </alternativeName>
    <alternativeName>
        <fullName>Doublecortin-like kinase 1</fullName>
    </alternativeName>
</protein>
<comment type="function">
    <text evidence="1">Probable kinase that may be involved in a calcium-signaling pathway controlling neuronal migration in the developing brain. May also participate in functions of the mature nervous system (By similarity).</text>
</comment>
<comment type="catalytic activity">
    <reaction>
        <text>L-seryl-[protein] + ATP = O-phospho-L-seryl-[protein] + ADP + H(+)</text>
        <dbReference type="Rhea" id="RHEA:17989"/>
        <dbReference type="Rhea" id="RHEA-COMP:9863"/>
        <dbReference type="Rhea" id="RHEA-COMP:11604"/>
        <dbReference type="ChEBI" id="CHEBI:15378"/>
        <dbReference type="ChEBI" id="CHEBI:29999"/>
        <dbReference type="ChEBI" id="CHEBI:30616"/>
        <dbReference type="ChEBI" id="CHEBI:83421"/>
        <dbReference type="ChEBI" id="CHEBI:456216"/>
        <dbReference type="EC" id="2.7.11.1"/>
    </reaction>
</comment>
<comment type="catalytic activity">
    <reaction>
        <text>L-threonyl-[protein] + ATP = O-phospho-L-threonyl-[protein] + ADP + H(+)</text>
        <dbReference type="Rhea" id="RHEA:46608"/>
        <dbReference type="Rhea" id="RHEA-COMP:11060"/>
        <dbReference type="Rhea" id="RHEA-COMP:11605"/>
        <dbReference type="ChEBI" id="CHEBI:15378"/>
        <dbReference type="ChEBI" id="CHEBI:30013"/>
        <dbReference type="ChEBI" id="CHEBI:30616"/>
        <dbReference type="ChEBI" id="CHEBI:61977"/>
        <dbReference type="ChEBI" id="CHEBI:456216"/>
        <dbReference type="EC" id="2.7.11.1"/>
    </reaction>
</comment>
<comment type="similarity">
    <text evidence="6">Belongs to the protein kinase superfamily. CAMK Ser/Thr protein kinase family. CaMK subfamily.</text>
</comment>
<sequence length="433" mass="47681">MLELIEVNGTPGSQLSTPRSGKSPSPSPTSPGSLRKQRISQHGGSSTSLSSTKVCSSMDENDGPGEEESDEGFQIPATITERYKVGRTIGDGNFAVVKECIERSTAREYALKIIKKSKCRGKEHMIQNEVSILRRVKHPNIVLLIEEMDVPTELYLVMELVKGGDLFDAITSTSKYTERDASGMLYNLASAIKYLHSLNIVHRDIKPENLLVYEHQDGSKSLKLGDFGLATIVDGPLYTVCGTPTYVAPEIIAETGYGLKVDIWAAGVITYILLCGFPPFRGSGDDQEVLFDQILMGQVDFPSPYWDNVSDSAKELINMMLLVNVDQRFSAVQVLEHPWVNDDGLPENEHQLSVAGKIKKHFNTGPKPSSTAAGVSVIATTALDKERQVFRRRRNQDVRGRYKAQPAPPELNSESEDYSPSSSETVRSPNSPF</sequence>
<name>DCLK1_RAT</name>
<organism>
    <name type="scientific">Rattus norvegicus</name>
    <name type="common">Rat</name>
    <dbReference type="NCBI Taxonomy" id="10116"/>
    <lineage>
        <taxon>Eukaryota</taxon>
        <taxon>Metazoa</taxon>
        <taxon>Chordata</taxon>
        <taxon>Craniata</taxon>
        <taxon>Vertebrata</taxon>
        <taxon>Euteleostomi</taxon>
        <taxon>Mammalia</taxon>
        <taxon>Eutheria</taxon>
        <taxon>Euarchontoglires</taxon>
        <taxon>Glires</taxon>
        <taxon>Rodentia</taxon>
        <taxon>Myomorpha</taxon>
        <taxon>Muroidea</taxon>
        <taxon>Muridae</taxon>
        <taxon>Murinae</taxon>
        <taxon>Rattus</taxon>
    </lineage>
</organism>
<feature type="chain" id="PRO_0000085921" description="Serine/threonine-protein kinase DCLK1">
    <location>
        <begin position="1"/>
        <end position="433"/>
    </location>
</feature>
<feature type="domain" description="Protein kinase" evidence="3">
    <location>
        <begin position="83"/>
        <end position="340"/>
    </location>
</feature>
<feature type="region of interest" description="Disordered" evidence="5">
    <location>
        <begin position="1"/>
        <end position="74"/>
    </location>
</feature>
<feature type="region of interest" description="Disordered" evidence="5">
    <location>
        <begin position="388"/>
        <end position="433"/>
    </location>
</feature>
<feature type="compositionally biased region" description="Low complexity" evidence="5">
    <location>
        <begin position="40"/>
        <end position="57"/>
    </location>
</feature>
<feature type="compositionally biased region" description="Acidic residues" evidence="5">
    <location>
        <begin position="59"/>
        <end position="71"/>
    </location>
</feature>
<feature type="compositionally biased region" description="Basic and acidic residues" evidence="5">
    <location>
        <begin position="388"/>
        <end position="400"/>
    </location>
</feature>
<feature type="active site" description="Proton acceptor" evidence="3 4">
    <location>
        <position position="204"/>
    </location>
</feature>
<feature type="binding site" evidence="3">
    <location>
        <begin position="89"/>
        <end position="97"/>
    </location>
    <ligand>
        <name>ATP</name>
        <dbReference type="ChEBI" id="CHEBI:30616"/>
    </ligand>
</feature>
<feature type="binding site" evidence="3">
    <location>
        <position position="112"/>
    </location>
    <ligand>
        <name>ATP</name>
        <dbReference type="ChEBI" id="CHEBI:30616"/>
    </ligand>
</feature>
<feature type="modified residue" description="Phosphoserine" evidence="2">
    <location>
        <position position="23"/>
    </location>
</feature>
<feature type="modified residue" description="Phosphoserine" evidence="7">
    <location>
        <position position="25"/>
    </location>
</feature>
<feature type="modified residue" description="Phosphoserine" evidence="2">
    <location>
        <position position="27"/>
    </location>
</feature>
<feature type="modified residue" description="Phosphoserine" evidence="7">
    <location>
        <position position="30"/>
    </location>
</feature>
<feature type="modified residue" description="Phosphoserine" evidence="2">
    <location>
        <position position="40"/>
    </location>
</feature>
<feature type="modified residue" description="Phosphoserine" evidence="7">
    <location>
        <position position="45"/>
    </location>
</feature>
<feature type="modified residue" description="Phosphoserine" evidence="7">
    <location>
        <position position="46"/>
    </location>
</feature>
<feature type="modified residue" description="Phosphoserine" evidence="2">
    <location>
        <position position="48"/>
    </location>
</feature>
<feature type="modified residue" description="Phosphoserine" evidence="2">
    <location>
        <position position="57"/>
    </location>
</feature>
<feature type="modified residue" description="Phosphoserine" evidence="2">
    <location>
        <position position="69"/>
    </location>
</feature>
<feature type="modified residue" description="Phosphotyrosine" evidence="2">
    <location>
        <position position="213"/>
    </location>
</feature>
<feature type="modified residue" description="Phosphoserine" evidence="7">
    <location>
        <position position="419"/>
    </location>
</feature>
<feature type="modified residue" description="Phosphoserine" evidence="2">
    <location>
        <position position="428"/>
    </location>
</feature>
<feature type="modified residue" description="Phosphoserine" evidence="2">
    <location>
        <position position="431"/>
    </location>
</feature>
<reference key="1">
    <citation type="journal article" date="1998" name="J. Mol. Neurosci.">
        <title>Hippocampal plasticity involves extensive gene induction and multiple cellular mechanisms.</title>
        <authorList>
            <person name="Hevroni D."/>
            <person name="Rattner A."/>
            <person name="Bundman M."/>
            <person name="Lederfein D."/>
            <person name="Gabarah A."/>
            <person name="Mangelus M."/>
            <person name="Silverman M.A."/>
            <person name="Kedar H."/>
            <person name="Naor C."/>
            <person name="Kornuc M."/>
            <person name="Hanoch T."/>
            <person name="Seger R."/>
            <person name="Theill L.E."/>
            <person name="Nedivi E."/>
            <person name="Richter-Levin G."/>
            <person name="Citri Y."/>
        </authorList>
    </citation>
    <scope>NUCLEOTIDE SEQUENCE [MRNA]</scope>
    <source>
        <strain>Wistar</strain>
    </source>
</reference>
<reference key="2">
    <citation type="journal article" date="2012" name="Nat. Commun.">
        <title>Quantitative maps of protein phosphorylation sites across 14 different rat organs and tissues.</title>
        <authorList>
            <person name="Lundby A."/>
            <person name="Secher A."/>
            <person name="Lage K."/>
            <person name="Nordsborg N.B."/>
            <person name="Dmytriyev A."/>
            <person name="Lundby C."/>
            <person name="Olsen J.V."/>
        </authorList>
    </citation>
    <scope>PHOSPHORYLATION [LARGE SCALE ANALYSIS] AT SER-25; SER-30; SER-45; SER-46 AND SER-419</scope>
    <scope>IDENTIFICATION BY MASS SPECTROMETRY [LARGE SCALE ANALYSIS]</scope>
</reference>
<gene>
    <name type="primary">Dclk1</name>
    <name type="synonym">Cpg16</name>
    <name type="synonym">Dcamkl1</name>
</gene>
<proteinExistence type="evidence at protein level"/>